<evidence type="ECO:0000255" key="1"/>
<evidence type="ECO:0000255" key="2">
    <source>
        <dbReference type="HAMAP-Rule" id="MF_01036"/>
    </source>
</evidence>
<reference key="1">
    <citation type="journal article" date="2003" name="Nat. Biotechnol.">
        <title>The genome sequence of the entomopathogenic bacterium Photorhabdus luminescens.</title>
        <authorList>
            <person name="Duchaud E."/>
            <person name="Rusniok C."/>
            <person name="Frangeul L."/>
            <person name="Buchrieser C."/>
            <person name="Givaudan A."/>
            <person name="Taourit S."/>
            <person name="Bocs S."/>
            <person name="Boursaux-Eude C."/>
            <person name="Chandler M."/>
            <person name="Charles J.-F."/>
            <person name="Dassa E."/>
            <person name="Derose R."/>
            <person name="Derzelle S."/>
            <person name="Freyssinet G."/>
            <person name="Gaudriault S."/>
            <person name="Medigue C."/>
            <person name="Lanois A."/>
            <person name="Powell K."/>
            <person name="Siguier P."/>
            <person name="Vincent R."/>
            <person name="Wingate V."/>
            <person name="Zouine M."/>
            <person name="Glaser P."/>
            <person name="Boemare N."/>
            <person name="Danchin A."/>
            <person name="Kunst F."/>
        </authorList>
    </citation>
    <scope>NUCLEOTIDE SEQUENCE [LARGE SCALE GENOMIC DNA]</scope>
    <source>
        <strain>DSM 15139 / CIP 105565 / TT01</strain>
    </source>
</reference>
<keyword id="KW-0963">Cytoplasm</keyword>
<keyword id="KW-0269">Exonuclease</keyword>
<keyword id="KW-0378">Hydrolase</keyword>
<keyword id="KW-0540">Nuclease</keyword>
<keyword id="KW-1185">Reference proteome</keyword>
<keyword id="KW-0694">RNA-binding</keyword>
<accession>Q7N4F5</accession>
<name>RNB_PHOLL</name>
<protein>
    <recommendedName>
        <fullName evidence="2">Exoribonuclease 2</fullName>
        <ecNumber evidence="2">3.1.13.1</ecNumber>
    </recommendedName>
    <alternativeName>
        <fullName evidence="2">Exoribonuclease II</fullName>
        <shortName evidence="2">RNase II</shortName>
        <shortName evidence="2">Ribonuclease II</shortName>
    </alternativeName>
</protein>
<organism>
    <name type="scientific">Photorhabdus laumondii subsp. laumondii (strain DSM 15139 / CIP 105565 / TT01)</name>
    <name type="common">Photorhabdus luminescens subsp. laumondii</name>
    <dbReference type="NCBI Taxonomy" id="243265"/>
    <lineage>
        <taxon>Bacteria</taxon>
        <taxon>Pseudomonadati</taxon>
        <taxon>Pseudomonadota</taxon>
        <taxon>Gammaproteobacteria</taxon>
        <taxon>Enterobacterales</taxon>
        <taxon>Morganellaceae</taxon>
        <taxon>Photorhabdus</taxon>
    </lineage>
</organism>
<dbReference type="EC" id="3.1.13.1" evidence="2"/>
<dbReference type="EMBL" id="BX571867">
    <property type="protein sequence ID" value="CAE14708.1"/>
    <property type="molecule type" value="Genomic_DNA"/>
</dbReference>
<dbReference type="RefSeq" id="WP_011146619.1">
    <property type="nucleotide sequence ID" value="NC_005126.1"/>
</dbReference>
<dbReference type="SMR" id="Q7N4F5"/>
<dbReference type="STRING" id="243265.plu2384"/>
<dbReference type="GeneID" id="48848654"/>
<dbReference type="KEGG" id="plu:plu2384"/>
<dbReference type="eggNOG" id="COG4776">
    <property type="taxonomic scope" value="Bacteria"/>
</dbReference>
<dbReference type="HOGENOM" id="CLU_002333_7_3_6"/>
<dbReference type="OrthoDB" id="9764149at2"/>
<dbReference type="Proteomes" id="UP000002514">
    <property type="component" value="Chromosome"/>
</dbReference>
<dbReference type="GO" id="GO:0005829">
    <property type="term" value="C:cytosol"/>
    <property type="evidence" value="ECO:0007669"/>
    <property type="project" value="UniProtKB-ARBA"/>
</dbReference>
<dbReference type="GO" id="GO:0008859">
    <property type="term" value="F:exoribonuclease II activity"/>
    <property type="evidence" value="ECO:0007669"/>
    <property type="project" value="UniProtKB-UniRule"/>
</dbReference>
<dbReference type="GO" id="GO:0003723">
    <property type="term" value="F:RNA binding"/>
    <property type="evidence" value="ECO:0007669"/>
    <property type="project" value="UniProtKB-KW"/>
</dbReference>
<dbReference type="GO" id="GO:0006402">
    <property type="term" value="P:mRNA catabolic process"/>
    <property type="evidence" value="ECO:0007669"/>
    <property type="project" value="UniProtKB-UniRule"/>
</dbReference>
<dbReference type="FunFam" id="2.40.50.140:FF:000079">
    <property type="entry name" value="Exoribonuclease 2"/>
    <property type="match status" value="1"/>
</dbReference>
<dbReference type="Gene3D" id="2.40.50.640">
    <property type="match status" value="1"/>
</dbReference>
<dbReference type="Gene3D" id="2.40.50.140">
    <property type="entry name" value="Nucleic acid-binding proteins"/>
    <property type="match status" value="2"/>
</dbReference>
<dbReference type="HAMAP" id="MF_01036">
    <property type="entry name" value="RNase_II"/>
    <property type="match status" value="1"/>
</dbReference>
<dbReference type="InterPro" id="IPR011129">
    <property type="entry name" value="CSD"/>
</dbReference>
<dbReference type="InterPro" id="IPR012340">
    <property type="entry name" value="NA-bd_OB-fold"/>
</dbReference>
<dbReference type="InterPro" id="IPR013223">
    <property type="entry name" value="RNase_B_OB_dom"/>
</dbReference>
<dbReference type="InterPro" id="IPR011804">
    <property type="entry name" value="RNase_II"/>
</dbReference>
<dbReference type="InterPro" id="IPR001900">
    <property type="entry name" value="RNase_II/R"/>
</dbReference>
<dbReference type="InterPro" id="IPR022966">
    <property type="entry name" value="RNase_II/R_CS"/>
</dbReference>
<dbReference type="InterPro" id="IPR004476">
    <property type="entry name" value="RNase_II/RNase_R"/>
</dbReference>
<dbReference type="InterPro" id="IPR050180">
    <property type="entry name" value="RNR_Ribonuclease"/>
</dbReference>
<dbReference type="InterPro" id="IPR003029">
    <property type="entry name" value="S1_domain"/>
</dbReference>
<dbReference type="NCBIfam" id="TIGR00358">
    <property type="entry name" value="3_prime_RNase"/>
    <property type="match status" value="1"/>
</dbReference>
<dbReference type="NCBIfam" id="NF003455">
    <property type="entry name" value="PRK05054.1"/>
    <property type="match status" value="1"/>
</dbReference>
<dbReference type="NCBIfam" id="TIGR02062">
    <property type="entry name" value="RNase_B"/>
    <property type="match status" value="1"/>
</dbReference>
<dbReference type="PANTHER" id="PTHR23355:SF37">
    <property type="entry name" value="EXORIBONUCLEASE 2"/>
    <property type="match status" value="1"/>
</dbReference>
<dbReference type="PANTHER" id="PTHR23355">
    <property type="entry name" value="RIBONUCLEASE"/>
    <property type="match status" value="1"/>
</dbReference>
<dbReference type="Pfam" id="PF08206">
    <property type="entry name" value="OB_RNB"/>
    <property type="match status" value="1"/>
</dbReference>
<dbReference type="Pfam" id="PF00773">
    <property type="entry name" value="RNB"/>
    <property type="match status" value="1"/>
</dbReference>
<dbReference type="Pfam" id="PF00575">
    <property type="entry name" value="S1"/>
    <property type="match status" value="1"/>
</dbReference>
<dbReference type="SMART" id="SM00357">
    <property type="entry name" value="CSP"/>
    <property type="match status" value="1"/>
</dbReference>
<dbReference type="SMART" id="SM00955">
    <property type="entry name" value="RNB"/>
    <property type="match status" value="1"/>
</dbReference>
<dbReference type="SMART" id="SM00316">
    <property type="entry name" value="S1"/>
    <property type="match status" value="1"/>
</dbReference>
<dbReference type="SUPFAM" id="SSF50249">
    <property type="entry name" value="Nucleic acid-binding proteins"/>
    <property type="match status" value="4"/>
</dbReference>
<dbReference type="PROSITE" id="PS01175">
    <property type="entry name" value="RIBONUCLEASE_II"/>
    <property type="match status" value="1"/>
</dbReference>
<proteinExistence type="inferred from homology"/>
<feature type="chain" id="PRO_0000166386" description="Exoribonuclease 2">
    <location>
        <begin position="1"/>
        <end position="647"/>
    </location>
</feature>
<feature type="domain" description="RNB" evidence="1">
    <location>
        <begin position="192"/>
        <end position="519"/>
    </location>
</feature>
<feature type="domain" description="S1 motif" evidence="2">
    <location>
        <begin position="564"/>
        <end position="646"/>
    </location>
</feature>
<gene>
    <name evidence="2" type="primary">rnb</name>
    <name type="ordered locus">plu2384</name>
</gene>
<sequence length="647" mass="74010">MFQNNPLLAQLKQQLHSQTLRVEGLVKGTEKGFGFLEVDGQKSYFIPPPHMKKVMHGDRVTAAIHTDKEREIAEPETLIEPFLNRFVGRIQKKENDNRLWITPDHPLLKDAIPCRPTNQVTHPFQHGDWAVAEMRHHPLKGSRGFHAEITGYITESDNHYAPWWVTLTRHNLERDAPAMTADCQMNDGDLERIDLTSLDFVTIDSATTEDMDDALHIAKQDDGSLKLSIAIADPTAYIAAGSELDQIAHQRAFTNYLPGFNIPMLPRDLSENLCSLRPNARRPALVCQVSILEDGQLGDDIAFFSTWVESKAKLVYDEVSDWLEKTGTWEPASEAIKTQITLLKEMSDRRNQWRHQNALIFKDRPDYRFILDENGYVLDIVVEQRRTANRIVEEAMITSNLCAAKILRDKLGFGIYNVHMGFEPLQIEQVVELLQENDIDAKTEELLTLDGFCKLRRELDKKPTQFLDSRIRRFQTFAEIKPEPGPHFGLGFDAYATWTSPIRKYSDMINHRLLKAIIQKTDVEQPSEETCLQLAERRRLNRMAERDVGDWLYARFLQPHAGTEQRFTAEIIDITRGGLRVRLADNGAVAFIPAPFLHAVRDELQCSQETGTVIIKGEVAYQLNDIIDVRIDEVRMETRNIVARPTA</sequence>
<comment type="function">
    <text evidence="2">Involved in mRNA degradation. Hydrolyzes single-stranded polyribonucleotides processively in the 3' to 5' direction.</text>
</comment>
<comment type="catalytic activity">
    <reaction evidence="2">
        <text>Exonucleolytic cleavage in the 3'- to 5'-direction to yield nucleoside 5'-phosphates.</text>
        <dbReference type="EC" id="3.1.13.1"/>
    </reaction>
</comment>
<comment type="subcellular location">
    <subcellularLocation>
        <location evidence="2">Cytoplasm</location>
    </subcellularLocation>
</comment>
<comment type="similarity">
    <text evidence="2">Belongs to the RNR ribonuclease family. RNase II subfamily.</text>
</comment>